<name>RL17_CALS8</name>
<comment type="subunit">
    <text evidence="1">Part of the 50S ribosomal subunit. Contacts protein L32.</text>
</comment>
<comment type="similarity">
    <text evidence="1">Belongs to the bacterial ribosomal protein bL17 family.</text>
</comment>
<sequence length="113" mass="13075">MNKLRKLKRDTDHRQALMRNLATSLFKHGRIMTTEAKAKDLRRVAEKLITIAKKGDLASYRRVLGYLYEEDVAYDLFQKIAPRYQGRNGGYTRIIKVGPRKGDGAMMVYIELV</sequence>
<evidence type="ECO:0000255" key="1">
    <source>
        <dbReference type="HAMAP-Rule" id="MF_01368"/>
    </source>
</evidence>
<evidence type="ECO:0000305" key="2"/>
<proteinExistence type="inferred from homology"/>
<organism>
    <name type="scientific">Caldicellulosiruptor saccharolyticus (strain ATCC 43494 / DSM 8903 / Tp8T 6331)</name>
    <dbReference type="NCBI Taxonomy" id="351627"/>
    <lineage>
        <taxon>Bacteria</taxon>
        <taxon>Bacillati</taxon>
        <taxon>Bacillota</taxon>
        <taxon>Bacillota incertae sedis</taxon>
        <taxon>Caldicellulosiruptorales</taxon>
        <taxon>Caldicellulosiruptoraceae</taxon>
        <taxon>Caldicellulosiruptor</taxon>
    </lineage>
</organism>
<gene>
    <name evidence="1" type="primary">rplQ</name>
    <name type="ordered locus">Csac_2258</name>
</gene>
<accession>A4XLQ1</accession>
<feature type="chain" id="PRO_1000068018" description="Large ribosomal subunit protein bL17">
    <location>
        <begin position="1"/>
        <end position="113"/>
    </location>
</feature>
<protein>
    <recommendedName>
        <fullName evidence="1">Large ribosomal subunit protein bL17</fullName>
    </recommendedName>
    <alternativeName>
        <fullName evidence="2">50S ribosomal protein L17</fullName>
    </alternativeName>
</protein>
<reference key="1">
    <citation type="submission" date="2007-04" db="EMBL/GenBank/DDBJ databases">
        <title>Genome sequence of the thermophilic hydrogen-producing bacterium Caldicellulosiruptor saccharolyticus DSM 8903.</title>
        <authorList>
            <person name="Copeland A."/>
            <person name="Lucas S."/>
            <person name="Lapidus A."/>
            <person name="Barry K."/>
            <person name="Detter J.C."/>
            <person name="Glavina del Rio T."/>
            <person name="Hammon N."/>
            <person name="Israni S."/>
            <person name="Dalin E."/>
            <person name="Tice H."/>
            <person name="Pitluck S."/>
            <person name="Kiss H."/>
            <person name="Brettin T."/>
            <person name="Bruce D."/>
            <person name="Han C."/>
            <person name="Schmutz J."/>
            <person name="Larimer F."/>
            <person name="Land M."/>
            <person name="Hauser L."/>
            <person name="Kyrpides N."/>
            <person name="Lykidis A."/>
            <person name="van de Werken H.J.G."/>
            <person name="Verhaart M.R.A."/>
            <person name="VanFossen A.L."/>
            <person name="Lewis D.L."/>
            <person name="Nichols J.D."/>
            <person name="Goorissen H.P."/>
            <person name="van Niel E.W.J."/>
            <person name="Stams F.J.M."/>
            <person name="Willquist K.U."/>
            <person name="Ward D.E."/>
            <person name="van der Oost J."/>
            <person name="Kelly R.M."/>
            <person name="Kengen S.M.W."/>
            <person name="Richardson P."/>
        </authorList>
    </citation>
    <scope>NUCLEOTIDE SEQUENCE [LARGE SCALE GENOMIC DNA]</scope>
    <source>
        <strain>ATCC 43494 / DSM 8903 / Tp8T 6331</strain>
    </source>
</reference>
<keyword id="KW-0687">Ribonucleoprotein</keyword>
<keyword id="KW-0689">Ribosomal protein</keyword>
<dbReference type="EMBL" id="CP000679">
    <property type="protein sequence ID" value="ABP67836.1"/>
    <property type="molecule type" value="Genomic_DNA"/>
</dbReference>
<dbReference type="RefSeq" id="WP_011917762.1">
    <property type="nucleotide sequence ID" value="NC_009437.1"/>
</dbReference>
<dbReference type="SMR" id="A4XLQ1"/>
<dbReference type="STRING" id="351627.Csac_2258"/>
<dbReference type="KEGG" id="csc:Csac_2258"/>
<dbReference type="eggNOG" id="COG0203">
    <property type="taxonomic scope" value="Bacteria"/>
</dbReference>
<dbReference type="HOGENOM" id="CLU_074407_2_2_9"/>
<dbReference type="OrthoDB" id="9809073at2"/>
<dbReference type="Proteomes" id="UP000000256">
    <property type="component" value="Chromosome"/>
</dbReference>
<dbReference type="GO" id="GO:0022625">
    <property type="term" value="C:cytosolic large ribosomal subunit"/>
    <property type="evidence" value="ECO:0007669"/>
    <property type="project" value="TreeGrafter"/>
</dbReference>
<dbReference type="GO" id="GO:0003735">
    <property type="term" value="F:structural constituent of ribosome"/>
    <property type="evidence" value="ECO:0007669"/>
    <property type="project" value="InterPro"/>
</dbReference>
<dbReference type="GO" id="GO:0006412">
    <property type="term" value="P:translation"/>
    <property type="evidence" value="ECO:0007669"/>
    <property type="project" value="UniProtKB-UniRule"/>
</dbReference>
<dbReference type="FunFam" id="3.90.1030.10:FF:000001">
    <property type="entry name" value="50S ribosomal protein L17"/>
    <property type="match status" value="1"/>
</dbReference>
<dbReference type="Gene3D" id="3.90.1030.10">
    <property type="entry name" value="Ribosomal protein L17"/>
    <property type="match status" value="1"/>
</dbReference>
<dbReference type="HAMAP" id="MF_01368">
    <property type="entry name" value="Ribosomal_bL17"/>
    <property type="match status" value="1"/>
</dbReference>
<dbReference type="InterPro" id="IPR000456">
    <property type="entry name" value="Ribosomal_bL17"/>
</dbReference>
<dbReference type="InterPro" id="IPR047859">
    <property type="entry name" value="Ribosomal_bL17_CS"/>
</dbReference>
<dbReference type="InterPro" id="IPR036373">
    <property type="entry name" value="Ribosomal_bL17_sf"/>
</dbReference>
<dbReference type="NCBIfam" id="TIGR00059">
    <property type="entry name" value="L17"/>
    <property type="match status" value="1"/>
</dbReference>
<dbReference type="PANTHER" id="PTHR14413:SF16">
    <property type="entry name" value="LARGE RIBOSOMAL SUBUNIT PROTEIN BL17M"/>
    <property type="match status" value="1"/>
</dbReference>
<dbReference type="PANTHER" id="PTHR14413">
    <property type="entry name" value="RIBOSOMAL PROTEIN L17"/>
    <property type="match status" value="1"/>
</dbReference>
<dbReference type="Pfam" id="PF01196">
    <property type="entry name" value="Ribosomal_L17"/>
    <property type="match status" value="1"/>
</dbReference>
<dbReference type="SUPFAM" id="SSF64263">
    <property type="entry name" value="Prokaryotic ribosomal protein L17"/>
    <property type="match status" value="1"/>
</dbReference>
<dbReference type="PROSITE" id="PS01167">
    <property type="entry name" value="RIBOSOMAL_L17"/>
    <property type="match status" value="1"/>
</dbReference>